<comment type="subunit">
    <text evidence="1">Part of the 50S ribosomal subunit. Contacts protein L32.</text>
</comment>
<comment type="similarity">
    <text evidence="1">Belongs to the bacterial ribosomal protein bL17 family.</text>
</comment>
<keyword id="KW-0687">Ribonucleoprotein</keyword>
<keyword id="KW-0689">Ribosomal protein</keyword>
<dbReference type="EMBL" id="CP000108">
    <property type="protein sequence ID" value="ABB29074.1"/>
    <property type="molecule type" value="Genomic_DNA"/>
</dbReference>
<dbReference type="SMR" id="Q3APK1"/>
<dbReference type="STRING" id="340177.Cag_1823"/>
<dbReference type="KEGG" id="cch:Cag_1823"/>
<dbReference type="eggNOG" id="COG0203">
    <property type="taxonomic scope" value="Bacteria"/>
</dbReference>
<dbReference type="HOGENOM" id="CLU_074407_0_1_10"/>
<dbReference type="OrthoDB" id="9809073at2"/>
<dbReference type="GO" id="GO:0022625">
    <property type="term" value="C:cytosolic large ribosomal subunit"/>
    <property type="evidence" value="ECO:0007669"/>
    <property type="project" value="TreeGrafter"/>
</dbReference>
<dbReference type="GO" id="GO:0003735">
    <property type="term" value="F:structural constituent of ribosome"/>
    <property type="evidence" value="ECO:0007669"/>
    <property type="project" value="InterPro"/>
</dbReference>
<dbReference type="GO" id="GO:0006412">
    <property type="term" value="P:translation"/>
    <property type="evidence" value="ECO:0007669"/>
    <property type="project" value="UniProtKB-UniRule"/>
</dbReference>
<dbReference type="Gene3D" id="3.90.1030.10">
    <property type="entry name" value="Ribosomal protein L17"/>
    <property type="match status" value="1"/>
</dbReference>
<dbReference type="HAMAP" id="MF_01368">
    <property type="entry name" value="Ribosomal_bL17"/>
    <property type="match status" value="1"/>
</dbReference>
<dbReference type="InterPro" id="IPR000456">
    <property type="entry name" value="Ribosomal_bL17"/>
</dbReference>
<dbReference type="InterPro" id="IPR047859">
    <property type="entry name" value="Ribosomal_bL17_CS"/>
</dbReference>
<dbReference type="InterPro" id="IPR036373">
    <property type="entry name" value="Ribosomal_bL17_sf"/>
</dbReference>
<dbReference type="NCBIfam" id="TIGR00059">
    <property type="entry name" value="L17"/>
    <property type="match status" value="1"/>
</dbReference>
<dbReference type="PANTHER" id="PTHR14413:SF16">
    <property type="entry name" value="LARGE RIBOSOMAL SUBUNIT PROTEIN BL17M"/>
    <property type="match status" value="1"/>
</dbReference>
<dbReference type="PANTHER" id="PTHR14413">
    <property type="entry name" value="RIBOSOMAL PROTEIN L17"/>
    <property type="match status" value="1"/>
</dbReference>
<dbReference type="Pfam" id="PF01196">
    <property type="entry name" value="Ribosomal_L17"/>
    <property type="match status" value="1"/>
</dbReference>
<dbReference type="SUPFAM" id="SSF64263">
    <property type="entry name" value="Prokaryotic ribosomal protein L17"/>
    <property type="match status" value="1"/>
</dbReference>
<dbReference type="PROSITE" id="PS01167">
    <property type="entry name" value="RIBOSOMAL_L17"/>
    <property type="match status" value="1"/>
</dbReference>
<name>RL17_CHLCH</name>
<reference key="1">
    <citation type="submission" date="2005-08" db="EMBL/GenBank/DDBJ databases">
        <title>Complete sequence of Chlorobium chlorochromatii CaD3.</title>
        <authorList>
            <consortium name="US DOE Joint Genome Institute"/>
            <person name="Copeland A."/>
            <person name="Lucas S."/>
            <person name="Lapidus A."/>
            <person name="Barry K."/>
            <person name="Detter J.C."/>
            <person name="Glavina T."/>
            <person name="Hammon N."/>
            <person name="Israni S."/>
            <person name="Pitluck S."/>
            <person name="Bryant D."/>
            <person name="Schmutz J."/>
            <person name="Larimer F."/>
            <person name="Land M."/>
            <person name="Kyrpides N."/>
            <person name="Ivanova N."/>
            <person name="Richardson P."/>
        </authorList>
    </citation>
    <scope>NUCLEOTIDE SEQUENCE [LARGE SCALE GENOMIC DNA]</scope>
    <source>
        <strain>CaD3</strain>
    </source>
</reference>
<proteinExistence type="inferred from homology"/>
<gene>
    <name evidence="1" type="primary">rplQ</name>
    <name type="ordered locus">Cag_1823</name>
</gene>
<accession>Q3APK1</accession>
<organism>
    <name type="scientific">Chlorobium chlorochromatii (strain CaD3)</name>
    <dbReference type="NCBI Taxonomy" id="340177"/>
    <lineage>
        <taxon>Bacteria</taxon>
        <taxon>Pseudomonadati</taxon>
        <taxon>Chlorobiota</taxon>
        <taxon>Chlorobiia</taxon>
        <taxon>Chlorobiales</taxon>
        <taxon>Chlorobiaceae</taxon>
        <taxon>Chlorobium/Pelodictyon group</taxon>
        <taxon>Chlorobium</taxon>
    </lineage>
</organism>
<evidence type="ECO:0000255" key="1">
    <source>
        <dbReference type="HAMAP-Rule" id="MF_01368"/>
    </source>
</evidence>
<evidence type="ECO:0000256" key="2">
    <source>
        <dbReference type="SAM" id="MobiDB-lite"/>
    </source>
</evidence>
<evidence type="ECO:0000305" key="3"/>
<protein>
    <recommendedName>
        <fullName evidence="1">Large ribosomal subunit protein bL17</fullName>
    </recommendedName>
    <alternativeName>
        <fullName evidence="3">50S ribosomal protein L17</fullName>
    </alternativeName>
</protein>
<feature type="chain" id="PRO_1000055795" description="Large ribosomal subunit protein bL17">
    <location>
        <begin position="1"/>
        <end position="154"/>
    </location>
</feature>
<feature type="region of interest" description="Disordered" evidence="2">
    <location>
        <begin position="125"/>
        <end position="154"/>
    </location>
</feature>
<sequence>MRKGKPARKLGRTAAHRRATLNNLSTQLILHKRIETTEAKAKETRKVIEKMITKARKGTVHAQRDIFKDIRDKKAIRILFEEVVAKVGARNGGYTRVIKLAPRLGDAAKMAIIEFVDYSEAISPAASQKSSKQDRAKRVQGSKKNVDAVAESAE</sequence>